<protein>
    <recommendedName>
        <fullName evidence="1">Holo-[acyl-carrier-protein] synthase</fullName>
        <shortName evidence="1">Holo-ACP synthase</shortName>
        <ecNumber evidence="1">2.7.8.7</ecNumber>
    </recommendedName>
    <alternativeName>
        <fullName evidence="1">4'-phosphopantetheinyl transferase AcpS</fullName>
    </alternativeName>
</protein>
<proteinExistence type="inferred from homology"/>
<comment type="function">
    <text evidence="1">Transfers the 4'-phosphopantetheine moiety from coenzyme A to a Ser of acyl-carrier-protein.</text>
</comment>
<comment type="catalytic activity">
    <reaction evidence="1">
        <text>apo-[ACP] + CoA = holo-[ACP] + adenosine 3',5'-bisphosphate + H(+)</text>
        <dbReference type="Rhea" id="RHEA:12068"/>
        <dbReference type="Rhea" id="RHEA-COMP:9685"/>
        <dbReference type="Rhea" id="RHEA-COMP:9690"/>
        <dbReference type="ChEBI" id="CHEBI:15378"/>
        <dbReference type="ChEBI" id="CHEBI:29999"/>
        <dbReference type="ChEBI" id="CHEBI:57287"/>
        <dbReference type="ChEBI" id="CHEBI:58343"/>
        <dbReference type="ChEBI" id="CHEBI:64479"/>
        <dbReference type="EC" id="2.7.8.7"/>
    </reaction>
</comment>
<comment type="cofactor">
    <cofactor evidence="1">
        <name>Mg(2+)</name>
        <dbReference type="ChEBI" id="CHEBI:18420"/>
    </cofactor>
</comment>
<comment type="subcellular location">
    <subcellularLocation>
        <location evidence="1">Cytoplasm</location>
    </subcellularLocation>
</comment>
<comment type="similarity">
    <text evidence="1">Belongs to the P-Pant transferase superfamily. AcpS family.</text>
</comment>
<keyword id="KW-0963">Cytoplasm</keyword>
<keyword id="KW-0275">Fatty acid biosynthesis</keyword>
<keyword id="KW-0276">Fatty acid metabolism</keyword>
<keyword id="KW-0444">Lipid biosynthesis</keyword>
<keyword id="KW-0443">Lipid metabolism</keyword>
<keyword id="KW-0460">Magnesium</keyword>
<keyword id="KW-0479">Metal-binding</keyword>
<keyword id="KW-0808">Transferase</keyword>
<reference key="1">
    <citation type="journal article" date="2001" name="Science">
        <title>Comparative genomics of Listeria species.</title>
        <authorList>
            <person name="Glaser P."/>
            <person name="Frangeul L."/>
            <person name="Buchrieser C."/>
            <person name="Rusniok C."/>
            <person name="Amend A."/>
            <person name="Baquero F."/>
            <person name="Berche P."/>
            <person name="Bloecker H."/>
            <person name="Brandt P."/>
            <person name="Chakraborty T."/>
            <person name="Charbit A."/>
            <person name="Chetouani F."/>
            <person name="Couve E."/>
            <person name="de Daruvar A."/>
            <person name="Dehoux P."/>
            <person name="Domann E."/>
            <person name="Dominguez-Bernal G."/>
            <person name="Duchaud E."/>
            <person name="Durant L."/>
            <person name="Dussurget O."/>
            <person name="Entian K.-D."/>
            <person name="Fsihi H."/>
            <person name="Garcia-del Portillo F."/>
            <person name="Garrido P."/>
            <person name="Gautier L."/>
            <person name="Goebel W."/>
            <person name="Gomez-Lopez N."/>
            <person name="Hain T."/>
            <person name="Hauf J."/>
            <person name="Jackson D."/>
            <person name="Jones L.-M."/>
            <person name="Kaerst U."/>
            <person name="Kreft J."/>
            <person name="Kuhn M."/>
            <person name="Kunst F."/>
            <person name="Kurapkat G."/>
            <person name="Madueno E."/>
            <person name="Maitournam A."/>
            <person name="Mata Vicente J."/>
            <person name="Ng E."/>
            <person name="Nedjari H."/>
            <person name="Nordsiek G."/>
            <person name="Novella S."/>
            <person name="de Pablos B."/>
            <person name="Perez-Diaz J.-C."/>
            <person name="Purcell R."/>
            <person name="Remmel B."/>
            <person name="Rose M."/>
            <person name="Schlueter T."/>
            <person name="Simoes N."/>
            <person name="Tierrez A."/>
            <person name="Vazquez-Boland J.-A."/>
            <person name="Voss H."/>
            <person name="Wehland J."/>
            <person name="Cossart P."/>
        </authorList>
    </citation>
    <scope>NUCLEOTIDE SEQUENCE [LARGE SCALE GENOMIC DNA]</scope>
    <source>
        <strain>ATCC BAA-680 / CLIP 11262</strain>
    </source>
</reference>
<name>ACPS_LISIN</name>
<gene>
    <name evidence="1" type="primary">acpS</name>
    <name type="ordered locus">lin0884</name>
</gene>
<accession>Q92DD0</accession>
<organism>
    <name type="scientific">Listeria innocua serovar 6a (strain ATCC BAA-680 / CLIP 11262)</name>
    <dbReference type="NCBI Taxonomy" id="272626"/>
    <lineage>
        <taxon>Bacteria</taxon>
        <taxon>Bacillati</taxon>
        <taxon>Bacillota</taxon>
        <taxon>Bacilli</taxon>
        <taxon>Bacillales</taxon>
        <taxon>Listeriaceae</taxon>
        <taxon>Listeria</taxon>
    </lineage>
</organism>
<dbReference type="EC" id="2.7.8.7" evidence="1"/>
<dbReference type="EMBL" id="AL596166">
    <property type="protein sequence ID" value="CAC96116.1"/>
    <property type="molecule type" value="Genomic_DNA"/>
</dbReference>
<dbReference type="PIR" id="AD1543">
    <property type="entry name" value="AD1543"/>
</dbReference>
<dbReference type="RefSeq" id="WP_003761296.1">
    <property type="nucleotide sequence ID" value="NC_003212.1"/>
</dbReference>
<dbReference type="SMR" id="Q92DD0"/>
<dbReference type="STRING" id="272626.gene:17565211"/>
<dbReference type="GeneID" id="93234327"/>
<dbReference type="KEGG" id="lin:lin0884"/>
<dbReference type="eggNOG" id="COG0736">
    <property type="taxonomic scope" value="Bacteria"/>
</dbReference>
<dbReference type="HOGENOM" id="CLU_089696_1_2_9"/>
<dbReference type="OrthoDB" id="517356at2"/>
<dbReference type="Proteomes" id="UP000002513">
    <property type="component" value="Chromosome"/>
</dbReference>
<dbReference type="GO" id="GO:0005737">
    <property type="term" value="C:cytoplasm"/>
    <property type="evidence" value="ECO:0007669"/>
    <property type="project" value="UniProtKB-SubCell"/>
</dbReference>
<dbReference type="GO" id="GO:0008897">
    <property type="term" value="F:holo-[acyl-carrier-protein] synthase activity"/>
    <property type="evidence" value="ECO:0007669"/>
    <property type="project" value="UniProtKB-UniRule"/>
</dbReference>
<dbReference type="GO" id="GO:0000287">
    <property type="term" value="F:magnesium ion binding"/>
    <property type="evidence" value="ECO:0007669"/>
    <property type="project" value="UniProtKB-UniRule"/>
</dbReference>
<dbReference type="GO" id="GO:0006633">
    <property type="term" value="P:fatty acid biosynthetic process"/>
    <property type="evidence" value="ECO:0007669"/>
    <property type="project" value="UniProtKB-UniRule"/>
</dbReference>
<dbReference type="Gene3D" id="3.90.470.20">
    <property type="entry name" value="4'-phosphopantetheinyl transferase domain"/>
    <property type="match status" value="1"/>
</dbReference>
<dbReference type="HAMAP" id="MF_00101">
    <property type="entry name" value="AcpS"/>
    <property type="match status" value="1"/>
</dbReference>
<dbReference type="InterPro" id="IPR008278">
    <property type="entry name" value="4-PPantetheinyl_Trfase_dom"/>
</dbReference>
<dbReference type="InterPro" id="IPR037143">
    <property type="entry name" value="4-PPantetheinyl_Trfase_dom_sf"/>
</dbReference>
<dbReference type="InterPro" id="IPR002582">
    <property type="entry name" value="ACPS"/>
</dbReference>
<dbReference type="InterPro" id="IPR004568">
    <property type="entry name" value="Ppantetheine-prot_Trfase_dom"/>
</dbReference>
<dbReference type="NCBIfam" id="TIGR00516">
    <property type="entry name" value="acpS"/>
    <property type="match status" value="1"/>
</dbReference>
<dbReference type="NCBIfam" id="TIGR00556">
    <property type="entry name" value="pantethn_trn"/>
    <property type="match status" value="1"/>
</dbReference>
<dbReference type="Pfam" id="PF01648">
    <property type="entry name" value="ACPS"/>
    <property type="match status" value="1"/>
</dbReference>
<dbReference type="SUPFAM" id="SSF56214">
    <property type="entry name" value="4'-phosphopantetheinyl transferase"/>
    <property type="match status" value="1"/>
</dbReference>
<evidence type="ECO:0000255" key="1">
    <source>
        <dbReference type="HAMAP-Rule" id="MF_00101"/>
    </source>
</evidence>
<sequence>MIKGIGLDMIDLDRVKQAVEKNPRFIERILTEKETKQYEKYEGSRKIEFLAGRFAAKEAYAKANGTGFGKHLSFTDVEILQVEDGRPHVTMPIKQGETVFVSITHTARSAAAQVIIEQ</sequence>
<feature type="chain" id="PRO_0000175663" description="Holo-[acyl-carrier-protein] synthase">
    <location>
        <begin position="1"/>
        <end position="118"/>
    </location>
</feature>
<feature type="binding site" evidence="1">
    <location>
        <position position="8"/>
    </location>
    <ligand>
        <name>Mg(2+)</name>
        <dbReference type="ChEBI" id="CHEBI:18420"/>
    </ligand>
</feature>
<feature type="binding site" evidence="1">
    <location>
        <position position="58"/>
    </location>
    <ligand>
        <name>Mg(2+)</name>
        <dbReference type="ChEBI" id="CHEBI:18420"/>
    </ligand>
</feature>